<accession>Q6SW04</accession>
<accession>D2K3U7</accession>
<comment type="function">
    <text>Acts as a transactivator along with IE2, and is required for oriLyt-dependent DNA replication in the transient transfection replication assay using native promoters.</text>
</comment>
<comment type="subunit">
    <text>Interacts (via N-terminus) with the viral DNA polymerase accessory subunit UL44. Interacts (via C-terminus) with host EIF2AK2.</text>
</comment>
<comment type="subcellular location">
    <subcellularLocation>
        <location evidence="1">Virion</location>
    </subcellularLocation>
    <subcellularLocation>
        <location evidence="1">Host cytoplasm</location>
    </subcellularLocation>
    <subcellularLocation>
        <location evidence="1">Host nucleus</location>
    </subcellularLocation>
    <text evidence="1">Isoform IRS1-263 is predominantly nuclear.</text>
</comment>
<comment type="alternative products">
    <event type="alternative initiation"/>
    <isoform>
        <id>Q6SW04-1</id>
        <name>IRS1</name>
        <sequence type="displayed"/>
    </isoform>
    <isoform>
        <id>Q6SW04-2</id>
        <name>IRS1-263</name>
        <sequence type="described" ref="VSP_043921"/>
    </isoform>
</comment>
<comment type="similarity">
    <text evidence="3">Belongs to the herpesviridae US22 family.</text>
</comment>
<reference key="1">
    <citation type="journal article" date="2004" name="J. Gen. Virol.">
        <title>Genetic content of wild-type human cytomegalovirus.</title>
        <authorList>
            <person name="Dolan A."/>
            <person name="Cunningham C."/>
            <person name="Hector R.D."/>
            <person name="Hassan-Walker A.F."/>
            <person name="Lee L."/>
            <person name="Addison C."/>
            <person name="Dargan D.J."/>
            <person name="McGeoch D.J."/>
            <person name="Gatherer D."/>
            <person name="Emery V.C."/>
            <person name="Griffiths P.D."/>
            <person name="Sinzger C."/>
            <person name="McSharry B.P."/>
            <person name="Wilkinson G.W.G."/>
            <person name="Davison A.J."/>
        </authorList>
    </citation>
    <scope>NUCLEOTIDE SEQUENCE [LARGE SCALE GENOMIC DNA]</scope>
</reference>
<sequence length="847" mass="91190">MAQRNGMSPRPPPLGRGRGAGGPSGVGSSPPSSCVPMGATSTAGTGASAAPTATPGHGVHRVEPRGPPGAPPSSGNNSNFWHGPERLLLSQIPVERQALTELEYQAMGAVWRAAFLANSTGRAMRKWSQRDAGTLLPLGRPYGFYARVTPRSQMNGVGATDLRQLSPRDAWIVLVATVVHEVDPAADPTVGDKAGHPEGLCAQDGLYLALGAGFRVFVYDLANNTLILAARDADEWFRHGAGEVVRLYRCNRLGVGTPRATLLPQPALRQTLLRAEEATALGRELRRRWAGTTVALQTPGRRLQPMVLLGAWQELAQYEPFASAPHPASLLTAVRRHLNQRLCCGWLALGAVLPARWLGCAAGPATGTTSPPAASGTETEAAGGDAPCAMAGAVGSAVTIPPQPYGGAGGSAICVPNADAHAVVGADATAAAAAAAAAPTVMVGPTAMAGPAASGTVPRAMLVVVLDELGAVFGYCPLDGHVYPLAAELSHFLRAGVLGALALGRESAPAAEAARRLLPELDREQWERPRWDALHLHPRAALWAREPHGQWEFMFREQRGDPIHDPVAFRLSDARTLGLDLTTVMTERQSQLPEKYIGFYQIRKPPWLMEQPPPPSRQTKPDAATMPPPLSAQASVSYALRYDDESWRPLSTVDDHKAWLDLDESHWVLGDSRPDDIKQRRLLKATQRRGAEIDRPMPVVPEECYDQRFTTEGHQVIPLCASEPEDDDEDPTYDELPSRPPQKHKPPDKPPRLCKTGPGPPPLPPKQRHGSTDGKVSAPRQSEHHKRQTRPPRPPPPKFGDRTAAHLSQNMRDMYLDMCTSSGHRPRPPAPPRPKKCQTHAPHHVHH</sequence>
<keyword id="KW-0024">Alternative initiation</keyword>
<keyword id="KW-1035">Host cytoplasm</keyword>
<keyword id="KW-1048">Host nucleus</keyword>
<keyword id="KW-0945">Host-virus interaction</keyword>
<keyword id="KW-1090">Inhibition of host innate immune response by virus</keyword>
<keyword id="KW-1114">Inhibition of host interferon signaling pathway by virus</keyword>
<keyword id="KW-1102">Inhibition of host PKR by virus</keyword>
<keyword id="KW-0922">Interferon antiviral system evasion</keyword>
<keyword id="KW-1185">Reference proteome</keyword>
<keyword id="KW-0804">Transcription</keyword>
<keyword id="KW-0899">Viral immunoevasion</keyword>
<keyword id="KW-0946">Virion</keyword>
<gene>
    <name type="primary">IRS1</name>
</gene>
<proteinExistence type="inferred from homology"/>
<evidence type="ECO:0000250" key="1"/>
<evidence type="ECO:0000256" key="2">
    <source>
        <dbReference type="SAM" id="MobiDB-lite"/>
    </source>
</evidence>
<evidence type="ECO:0000305" key="3"/>
<dbReference type="EMBL" id="AY446894">
    <property type="protein sequence ID" value="AAR31691.1"/>
    <property type="molecule type" value="Genomic_DNA"/>
</dbReference>
<dbReference type="RefSeq" id="YP_081587.1">
    <property type="nucleotide sequence ID" value="NC_006273.2"/>
</dbReference>
<dbReference type="BioGRID" id="1678127">
    <property type="interactions" value="1"/>
</dbReference>
<dbReference type="GeneID" id="3077574"/>
<dbReference type="KEGG" id="vg:3077574"/>
<dbReference type="Reactome" id="R-HSA-9609690">
    <property type="pathway name" value="HCMV Early Events"/>
</dbReference>
<dbReference type="Reactome" id="R-HSA-9610379">
    <property type="pathway name" value="HCMV Late Events"/>
</dbReference>
<dbReference type="Proteomes" id="UP000000938">
    <property type="component" value="Segment"/>
</dbReference>
<dbReference type="GO" id="GO:0030430">
    <property type="term" value="C:host cell cytoplasm"/>
    <property type="evidence" value="ECO:0007669"/>
    <property type="project" value="UniProtKB-SubCell"/>
</dbReference>
<dbReference type="GO" id="GO:0042025">
    <property type="term" value="C:host cell nucleus"/>
    <property type="evidence" value="ECO:0007669"/>
    <property type="project" value="UniProtKB-SubCell"/>
</dbReference>
<dbReference type="GO" id="GO:0019033">
    <property type="term" value="C:viral tegument"/>
    <property type="evidence" value="ECO:0000304"/>
    <property type="project" value="Reactome"/>
</dbReference>
<dbReference type="GO" id="GO:0030291">
    <property type="term" value="F:protein serine/threonine kinase inhibitor activity"/>
    <property type="evidence" value="ECO:0007669"/>
    <property type="project" value="UniProtKB-KW"/>
</dbReference>
<dbReference type="GO" id="GO:0052170">
    <property type="term" value="P:symbiont-mediated suppression of host innate immune response"/>
    <property type="evidence" value="ECO:0007669"/>
    <property type="project" value="UniProtKB-KW"/>
</dbReference>
<dbReference type="GO" id="GO:0039580">
    <property type="term" value="P:symbiont-mediated suppression of host PKR/eIFalpha signaling"/>
    <property type="evidence" value="ECO:0007669"/>
    <property type="project" value="UniProtKB-KW"/>
</dbReference>
<dbReference type="GO" id="GO:0039502">
    <property type="term" value="P:symbiont-mediated suppression of host type I interferon-mediated signaling pathway"/>
    <property type="evidence" value="ECO:0007669"/>
    <property type="project" value="UniProtKB-KW"/>
</dbReference>
<dbReference type="InterPro" id="IPR003360">
    <property type="entry name" value="US22-like"/>
</dbReference>
<dbReference type="Pfam" id="PF02393">
    <property type="entry name" value="US22"/>
    <property type="match status" value="2"/>
</dbReference>
<organism>
    <name type="scientific">Human cytomegalovirus (strain Merlin)</name>
    <name type="common">HHV-5</name>
    <name type="synonym">Human herpesvirus 5</name>
    <dbReference type="NCBI Taxonomy" id="295027"/>
    <lineage>
        <taxon>Viruses</taxon>
        <taxon>Duplodnaviria</taxon>
        <taxon>Heunggongvirae</taxon>
        <taxon>Peploviricota</taxon>
        <taxon>Herviviricetes</taxon>
        <taxon>Herpesvirales</taxon>
        <taxon>Orthoherpesviridae</taxon>
        <taxon>Betaherpesvirinae</taxon>
        <taxon>Cytomegalovirus</taxon>
        <taxon>Cytomegalovirus humanbeta5</taxon>
        <taxon>Human cytomegalovirus</taxon>
    </lineage>
</organism>
<protein>
    <recommendedName>
        <fullName>Protein IRS1</fullName>
    </recommendedName>
</protein>
<organismHost>
    <name type="scientific">Homo sapiens</name>
    <name type="common">Human</name>
    <dbReference type="NCBI Taxonomy" id="9606"/>
</organismHost>
<feature type="chain" id="PRO_0000417831" description="Protein IRS1">
    <location>
        <begin position="1"/>
        <end position="847"/>
    </location>
</feature>
<feature type="region of interest" description="Disordered" evidence="2">
    <location>
        <begin position="1"/>
        <end position="82"/>
    </location>
</feature>
<feature type="region of interest" description="Disordered" evidence="2">
    <location>
        <begin position="607"/>
        <end position="627"/>
    </location>
</feature>
<feature type="region of interest" description="Disordered" evidence="2">
    <location>
        <begin position="715"/>
        <end position="847"/>
    </location>
</feature>
<feature type="compositionally biased region" description="Gly residues" evidence="2">
    <location>
        <begin position="16"/>
        <end position="25"/>
    </location>
</feature>
<feature type="compositionally biased region" description="Low complexity" evidence="2">
    <location>
        <begin position="26"/>
        <end position="56"/>
    </location>
</feature>
<feature type="compositionally biased region" description="Acidic residues" evidence="2">
    <location>
        <begin position="723"/>
        <end position="733"/>
    </location>
</feature>
<feature type="compositionally biased region" description="Basic residues" evidence="2">
    <location>
        <begin position="833"/>
        <end position="847"/>
    </location>
</feature>
<feature type="splice variant" id="VSP_043921" description="In isoform IRS1-263." evidence="3">
    <location>
        <begin position="1"/>
        <end position="584"/>
    </location>
</feature>
<name>IRS1_HCMVM</name>